<protein>
    <recommendedName>
        <fullName evidence="1">Dihydroxy-acid dehydratase</fullName>
        <shortName evidence="1">DAD</shortName>
        <ecNumber evidence="1">4.2.1.9</ecNumber>
    </recommendedName>
</protein>
<name>ILVD_OCEIH</name>
<proteinExistence type="inferred from homology"/>
<dbReference type="EC" id="4.2.1.9" evidence="1"/>
<dbReference type="EMBL" id="BA000028">
    <property type="protein sequence ID" value="BAC14580.1"/>
    <property type="molecule type" value="Genomic_DNA"/>
</dbReference>
<dbReference type="RefSeq" id="WP_011067017.1">
    <property type="nucleotide sequence ID" value="NC_004193.1"/>
</dbReference>
<dbReference type="SMR" id="Q8EN63"/>
<dbReference type="STRING" id="221109.gene:10734876"/>
<dbReference type="KEGG" id="oih:OB2624"/>
<dbReference type="eggNOG" id="COG0129">
    <property type="taxonomic scope" value="Bacteria"/>
</dbReference>
<dbReference type="HOGENOM" id="CLU_014271_4_2_9"/>
<dbReference type="OrthoDB" id="9807077at2"/>
<dbReference type="PhylomeDB" id="Q8EN63"/>
<dbReference type="UniPathway" id="UPA00047">
    <property type="reaction ID" value="UER00057"/>
</dbReference>
<dbReference type="UniPathway" id="UPA00049">
    <property type="reaction ID" value="UER00061"/>
</dbReference>
<dbReference type="Proteomes" id="UP000000822">
    <property type="component" value="Chromosome"/>
</dbReference>
<dbReference type="GO" id="GO:0051537">
    <property type="term" value="F:2 iron, 2 sulfur cluster binding"/>
    <property type="evidence" value="ECO:0007669"/>
    <property type="project" value="UniProtKB-UniRule"/>
</dbReference>
<dbReference type="GO" id="GO:0004160">
    <property type="term" value="F:dihydroxy-acid dehydratase activity"/>
    <property type="evidence" value="ECO:0007669"/>
    <property type="project" value="UniProtKB-UniRule"/>
</dbReference>
<dbReference type="GO" id="GO:0000287">
    <property type="term" value="F:magnesium ion binding"/>
    <property type="evidence" value="ECO:0007669"/>
    <property type="project" value="UniProtKB-UniRule"/>
</dbReference>
<dbReference type="GO" id="GO:0009097">
    <property type="term" value="P:isoleucine biosynthetic process"/>
    <property type="evidence" value="ECO:0007669"/>
    <property type="project" value="UniProtKB-UniRule"/>
</dbReference>
<dbReference type="GO" id="GO:0009099">
    <property type="term" value="P:L-valine biosynthetic process"/>
    <property type="evidence" value="ECO:0007669"/>
    <property type="project" value="UniProtKB-UniRule"/>
</dbReference>
<dbReference type="FunFam" id="3.50.30.80:FF:000001">
    <property type="entry name" value="Dihydroxy-acid dehydratase"/>
    <property type="match status" value="1"/>
</dbReference>
<dbReference type="Gene3D" id="3.50.30.80">
    <property type="entry name" value="IlvD/EDD C-terminal domain-like"/>
    <property type="match status" value="1"/>
</dbReference>
<dbReference type="HAMAP" id="MF_00012">
    <property type="entry name" value="IlvD"/>
    <property type="match status" value="1"/>
</dbReference>
<dbReference type="InterPro" id="IPR050165">
    <property type="entry name" value="DHAD_IlvD/Edd"/>
</dbReference>
<dbReference type="InterPro" id="IPR042096">
    <property type="entry name" value="Dihydro-acid_dehy_C"/>
</dbReference>
<dbReference type="InterPro" id="IPR004404">
    <property type="entry name" value="DihydroxyA_deHydtase"/>
</dbReference>
<dbReference type="InterPro" id="IPR020558">
    <property type="entry name" value="DiOHA_6PGluconate_deHydtase_CS"/>
</dbReference>
<dbReference type="InterPro" id="IPR056740">
    <property type="entry name" value="ILV_EDD_C"/>
</dbReference>
<dbReference type="InterPro" id="IPR000581">
    <property type="entry name" value="ILV_EDD_N"/>
</dbReference>
<dbReference type="InterPro" id="IPR037237">
    <property type="entry name" value="IlvD/EDD_N"/>
</dbReference>
<dbReference type="NCBIfam" id="TIGR00110">
    <property type="entry name" value="ilvD"/>
    <property type="match status" value="1"/>
</dbReference>
<dbReference type="NCBIfam" id="NF002068">
    <property type="entry name" value="PRK00911.1"/>
    <property type="match status" value="1"/>
</dbReference>
<dbReference type="PANTHER" id="PTHR21000">
    <property type="entry name" value="DIHYDROXY-ACID DEHYDRATASE DAD"/>
    <property type="match status" value="1"/>
</dbReference>
<dbReference type="PANTHER" id="PTHR21000:SF5">
    <property type="entry name" value="DIHYDROXY-ACID DEHYDRATASE, MITOCHONDRIAL"/>
    <property type="match status" value="1"/>
</dbReference>
<dbReference type="Pfam" id="PF24877">
    <property type="entry name" value="ILV_EDD_C"/>
    <property type="match status" value="1"/>
</dbReference>
<dbReference type="Pfam" id="PF00920">
    <property type="entry name" value="ILVD_EDD_N"/>
    <property type="match status" value="1"/>
</dbReference>
<dbReference type="SUPFAM" id="SSF143975">
    <property type="entry name" value="IlvD/EDD N-terminal domain-like"/>
    <property type="match status" value="1"/>
</dbReference>
<dbReference type="SUPFAM" id="SSF52016">
    <property type="entry name" value="LeuD/IlvD-like"/>
    <property type="match status" value="1"/>
</dbReference>
<dbReference type="PROSITE" id="PS00886">
    <property type="entry name" value="ILVD_EDD_1"/>
    <property type="match status" value="1"/>
</dbReference>
<dbReference type="PROSITE" id="PS00887">
    <property type="entry name" value="ILVD_EDD_2"/>
    <property type="match status" value="1"/>
</dbReference>
<gene>
    <name evidence="1" type="primary">ilvD</name>
    <name type="ordered locus">OB2624</name>
</gene>
<feature type="chain" id="PRO_0000103486" description="Dihydroxy-acid dehydratase">
    <location>
        <begin position="1"/>
        <end position="561"/>
    </location>
</feature>
<feature type="active site" description="Proton acceptor" evidence="1">
    <location>
        <position position="473"/>
    </location>
</feature>
<feature type="binding site" evidence="1">
    <location>
        <position position="51"/>
    </location>
    <ligand>
        <name>[2Fe-2S] cluster</name>
        <dbReference type="ChEBI" id="CHEBI:190135"/>
    </ligand>
</feature>
<feature type="binding site" evidence="1">
    <location>
        <position position="83"/>
    </location>
    <ligand>
        <name>Mg(2+)</name>
        <dbReference type="ChEBI" id="CHEBI:18420"/>
    </ligand>
</feature>
<feature type="binding site" evidence="1">
    <location>
        <position position="124"/>
    </location>
    <ligand>
        <name>[2Fe-2S] cluster</name>
        <dbReference type="ChEBI" id="CHEBI:190135"/>
    </ligand>
</feature>
<feature type="binding site" evidence="1">
    <location>
        <position position="125"/>
    </location>
    <ligand>
        <name>Mg(2+)</name>
        <dbReference type="ChEBI" id="CHEBI:18420"/>
    </ligand>
</feature>
<feature type="binding site" description="via carbamate group" evidence="1">
    <location>
        <position position="126"/>
    </location>
    <ligand>
        <name>Mg(2+)</name>
        <dbReference type="ChEBI" id="CHEBI:18420"/>
    </ligand>
</feature>
<feature type="binding site" evidence="1">
    <location>
        <position position="196"/>
    </location>
    <ligand>
        <name>[2Fe-2S] cluster</name>
        <dbReference type="ChEBI" id="CHEBI:190135"/>
    </ligand>
</feature>
<feature type="binding site" evidence="1">
    <location>
        <position position="447"/>
    </location>
    <ligand>
        <name>Mg(2+)</name>
        <dbReference type="ChEBI" id="CHEBI:18420"/>
    </ligand>
</feature>
<feature type="modified residue" description="N6-carboxylysine" evidence="1">
    <location>
        <position position="126"/>
    </location>
</feature>
<comment type="function">
    <text evidence="1">Functions in the biosynthesis of branched-chain amino acids. Catalyzes the dehydration of (2R,3R)-2,3-dihydroxy-3-methylpentanoate (2,3-dihydroxy-3-methylvalerate) into 2-oxo-3-methylpentanoate (2-oxo-3-methylvalerate) and of (2R)-2,3-dihydroxy-3-methylbutanoate (2,3-dihydroxyisovalerate) into 2-oxo-3-methylbutanoate (2-oxoisovalerate), the penultimate precursor to L-isoleucine and L-valine, respectively.</text>
</comment>
<comment type="catalytic activity">
    <reaction evidence="1">
        <text>(2R)-2,3-dihydroxy-3-methylbutanoate = 3-methyl-2-oxobutanoate + H2O</text>
        <dbReference type="Rhea" id="RHEA:24809"/>
        <dbReference type="ChEBI" id="CHEBI:11851"/>
        <dbReference type="ChEBI" id="CHEBI:15377"/>
        <dbReference type="ChEBI" id="CHEBI:49072"/>
        <dbReference type="EC" id="4.2.1.9"/>
    </reaction>
    <physiologicalReaction direction="left-to-right" evidence="1">
        <dbReference type="Rhea" id="RHEA:24810"/>
    </physiologicalReaction>
</comment>
<comment type="catalytic activity">
    <reaction evidence="1">
        <text>(2R,3R)-2,3-dihydroxy-3-methylpentanoate = (S)-3-methyl-2-oxopentanoate + H2O</text>
        <dbReference type="Rhea" id="RHEA:27694"/>
        <dbReference type="ChEBI" id="CHEBI:15377"/>
        <dbReference type="ChEBI" id="CHEBI:35146"/>
        <dbReference type="ChEBI" id="CHEBI:49258"/>
        <dbReference type="EC" id="4.2.1.9"/>
    </reaction>
    <physiologicalReaction direction="left-to-right" evidence="1">
        <dbReference type="Rhea" id="RHEA:27695"/>
    </physiologicalReaction>
</comment>
<comment type="cofactor">
    <cofactor evidence="1">
        <name>[2Fe-2S] cluster</name>
        <dbReference type="ChEBI" id="CHEBI:190135"/>
    </cofactor>
    <text evidence="1">Binds 1 [2Fe-2S] cluster per subunit. This cluster acts as a Lewis acid cofactor.</text>
</comment>
<comment type="cofactor">
    <cofactor evidence="1">
        <name>Mg(2+)</name>
        <dbReference type="ChEBI" id="CHEBI:18420"/>
    </cofactor>
</comment>
<comment type="pathway">
    <text evidence="1">Amino-acid biosynthesis; L-isoleucine biosynthesis; L-isoleucine from 2-oxobutanoate: step 3/4.</text>
</comment>
<comment type="pathway">
    <text evidence="1">Amino-acid biosynthesis; L-valine biosynthesis; L-valine from pyruvate: step 3/4.</text>
</comment>
<comment type="subunit">
    <text evidence="1">Homodimer.</text>
</comment>
<comment type="similarity">
    <text evidence="1">Belongs to the IlvD/Edd family.</text>
</comment>
<sequence length="561" mass="59136">MGKDLRIKSKAFDGTMRAPNRAMLRAVGLTDEDFKKPMIGVASTWAEVTPCNIHLNDLALLAKKGVRHSDAVPLVFNTITVSDGISMGTQGMNYSLPSRDLIADSIETVVGAENLDGLVAIGACDKNIPGCLIAIANAGVPSVFVYGGTIAPGNVDGKDIDIVSVFEGVGQHNAGAIDDNQLRKVECNACPGAGACGGMYTANTMASAAEALGISLPGSSSNPAESEEKQGDVEAAGEAIKDLLEKGIYPKDILTKKAFENAITVVMALGGSTNAILHLLAVSHAAEVDLTIDDFNRIQKKVPHLADLKPSGRFVMQDLHRVGGVQAVMKLLHENGYLHGDCLTVTGKTIAENLAEAPALKENQQVIMPFDNPKREDGPLIVLKGNLSPTGAVAKVSGVKVKRHTGPARVFNTEKEATQAILDNKIKEGDVLVIRYVGPKGGPGMPEMLSVSSILVGKGMGESVALLTDGRFSGGTHGLVVGHISPEAQDGGPIAFLQEGDMVTIDSNKREISMDVSEDEIKLRQGKWEAPELHKKGVLGKYAHNVTCSSKGAVTDYLNRE</sequence>
<accession>Q8EN63</accession>
<organism>
    <name type="scientific">Oceanobacillus iheyensis (strain DSM 14371 / CIP 107618 / JCM 11309 / KCTC 3954 / HTE831)</name>
    <dbReference type="NCBI Taxonomy" id="221109"/>
    <lineage>
        <taxon>Bacteria</taxon>
        <taxon>Bacillati</taxon>
        <taxon>Bacillota</taxon>
        <taxon>Bacilli</taxon>
        <taxon>Bacillales</taxon>
        <taxon>Bacillaceae</taxon>
        <taxon>Oceanobacillus</taxon>
    </lineage>
</organism>
<reference key="1">
    <citation type="journal article" date="2002" name="Nucleic Acids Res.">
        <title>Genome sequence of Oceanobacillus iheyensis isolated from the Iheya Ridge and its unexpected adaptive capabilities to extreme environments.</title>
        <authorList>
            <person name="Takami H."/>
            <person name="Takaki Y."/>
            <person name="Uchiyama I."/>
        </authorList>
    </citation>
    <scope>NUCLEOTIDE SEQUENCE [LARGE SCALE GENOMIC DNA]</scope>
    <source>
        <strain>DSM 14371 / CIP 107618 / JCM 11309 / KCTC 3954 / HTE831</strain>
    </source>
</reference>
<keyword id="KW-0001">2Fe-2S</keyword>
<keyword id="KW-0028">Amino-acid biosynthesis</keyword>
<keyword id="KW-0100">Branched-chain amino acid biosynthesis</keyword>
<keyword id="KW-0408">Iron</keyword>
<keyword id="KW-0411">Iron-sulfur</keyword>
<keyword id="KW-0456">Lyase</keyword>
<keyword id="KW-0460">Magnesium</keyword>
<keyword id="KW-0479">Metal-binding</keyword>
<keyword id="KW-1185">Reference proteome</keyword>
<evidence type="ECO:0000255" key="1">
    <source>
        <dbReference type="HAMAP-Rule" id="MF_00012"/>
    </source>
</evidence>